<sequence length="310" mass="32875">MLDANKLQQAVDQAYTQFHSLNGGQNADYIPFLANVPGQLAAVAIVTCDGNVYSAGDSDYRFALESISKVCTLALALEDVGPQAVQDKIGADPTGLPFNSVIALELHGGKPLSPLVNAGAIATTSLINAENAEQRWQRILHIQQQLAGEQVALSDEVNQSEQTTNFHNRAIAWLLYSAGYLYCDAMEACDVYTRQCSTLINTVELATLGATLAAGGVNPLTHKRVLQADNVPYILAEMMMEGLYGRSGDWAYRVGLPGKSGVGGGILAVVPGVMGIAAFSPPLDEEGNSVRGQKMVASVAKQLGYNVFKG</sequence>
<name>GLSA1_SHIFL</name>
<dbReference type="EC" id="3.5.1.2" evidence="1"/>
<dbReference type="EMBL" id="AE005674">
    <property type="protein sequence ID" value="AAN42085.1"/>
    <property type="molecule type" value="Genomic_DNA"/>
</dbReference>
<dbReference type="EMBL" id="AE014073">
    <property type="protein sequence ID" value="AAP15962.1"/>
    <property type="molecule type" value="Genomic_DNA"/>
</dbReference>
<dbReference type="SMR" id="Q83SE1"/>
<dbReference type="STRING" id="198214.SF0430"/>
<dbReference type="PaxDb" id="198214-SF0430"/>
<dbReference type="KEGG" id="sfl:SF0430"/>
<dbReference type="KEGG" id="sfx:S0437"/>
<dbReference type="PATRIC" id="fig|198214.7.peg.492"/>
<dbReference type="HOGENOM" id="CLU_027932_1_0_6"/>
<dbReference type="Proteomes" id="UP000001006">
    <property type="component" value="Chromosome"/>
</dbReference>
<dbReference type="Proteomes" id="UP000002673">
    <property type="component" value="Chromosome"/>
</dbReference>
<dbReference type="GO" id="GO:0004359">
    <property type="term" value="F:glutaminase activity"/>
    <property type="evidence" value="ECO:0007669"/>
    <property type="project" value="UniProtKB-UniRule"/>
</dbReference>
<dbReference type="GO" id="GO:0006537">
    <property type="term" value="P:glutamate biosynthetic process"/>
    <property type="evidence" value="ECO:0007669"/>
    <property type="project" value="TreeGrafter"/>
</dbReference>
<dbReference type="GO" id="GO:0006543">
    <property type="term" value="P:glutamine catabolic process"/>
    <property type="evidence" value="ECO:0007669"/>
    <property type="project" value="TreeGrafter"/>
</dbReference>
<dbReference type="FunFam" id="3.40.710.10:FF:000014">
    <property type="entry name" value="Glutaminase"/>
    <property type="match status" value="1"/>
</dbReference>
<dbReference type="Gene3D" id="3.40.710.10">
    <property type="entry name" value="DD-peptidase/beta-lactamase superfamily"/>
    <property type="match status" value="1"/>
</dbReference>
<dbReference type="HAMAP" id="MF_00313">
    <property type="entry name" value="Glutaminase"/>
    <property type="match status" value="1"/>
</dbReference>
<dbReference type="InterPro" id="IPR012338">
    <property type="entry name" value="Beta-lactam/transpept-like"/>
</dbReference>
<dbReference type="InterPro" id="IPR015868">
    <property type="entry name" value="Glutaminase"/>
</dbReference>
<dbReference type="NCBIfam" id="TIGR03814">
    <property type="entry name" value="Gln_ase"/>
    <property type="match status" value="1"/>
</dbReference>
<dbReference type="NCBIfam" id="NF009020">
    <property type="entry name" value="PRK12356.1"/>
    <property type="match status" value="1"/>
</dbReference>
<dbReference type="PANTHER" id="PTHR12544">
    <property type="entry name" value="GLUTAMINASE"/>
    <property type="match status" value="1"/>
</dbReference>
<dbReference type="PANTHER" id="PTHR12544:SF48">
    <property type="entry name" value="GLUTAMINASE 1"/>
    <property type="match status" value="1"/>
</dbReference>
<dbReference type="Pfam" id="PF04960">
    <property type="entry name" value="Glutaminase"/>
    <property type="match status" value="1"/>
</dbReference>
<dbReference type="SUPFAM" id="SSF56601">
    <property type="entry name" value="beta-lactamase/transpeptidase-like"/>
    <property type="match status" value="1"/>
</dbReference>
<proteinExistence type="inferred from homology"/>
<evidence type="ECO:0000255" key="1">
    <source>
        <dbReference type="HAMAP-Rule" id="MF_00313"/>
    </source>
</evidence>
<protein>
    <recommendedName>
        <fullName evidence="1">Glutaminase 1</fullName>
        <ecNumber evidence="1">3.5.1.2</ecNumber>
    </recommendedName>
</protein>
<organism>
    <name type="scientific">Shigella flexneri</name>
    <dbReference type="NCBI Taxonomy" id="623"/>
    <lineage>
        <taxon>Bacteria</taxon>
        <taxon>Pseudomonadati</taxon>
        <taxon>Pseudomonadota</taxon>
        <taxon>Gammaproteobacteria</taxon>
        <taxon>Enterobacterales</taxon>
        <taxon>Enterobacteriaceae</taxon>
        <taxon>Shigella</taxon>
    </lineage>
</organism>
<accession>Q83SE1</accession>
<reference key="1">
    <citation type="journal article" date="2002" name="Nucleic Acids Res.">
        <title>Genome sequence of Shigella flexneri 2a: insights into pathogenicity through comparison with genomes of Escherichia coli K12 and O157.</title>
        <authorList>
            <person name="Jin Q."/>
            <person name="Yuan Z."/>
            <person name="Xu J."/>
            <person name="Wang Y."/>
            <person name="Shen Y."/>
            <person name="Lu W."/>
            <person name="Wang J."/>
            <person name="Liu H."/>
            <person name="Yang J."/>
            <person name="Yang F."/>
            <person name="Zhang X."/>
            <person name="Zhang J."/>
            <person name="Yang G."/>
            <person name="Wu H."/>
            <person name="Qu D."/>
            <person name="Dong J."/>
            <person name="Sun L."/>
            <person name="Xue Y."/>
            <person name="Zhao A."/>
            <person name="Gao Y."/>
            <person name="Zhu J."/>
            <person name="Kan B."/>
            <person name="Ding K."/>
            <person name="Chen S."/>
            <person name="Cheng H."/>
            <person name="Yao Z."/>
            <person name="He B."/>
            <person name="Chen R."/>
            <person name="Ma D."/>
            <person name="Qiang B."/>
            <person name="Wen Y."/>
            <person name="Hou Y."/>
            <person name="Yu J."/>
        </authorList>
    </citation>
    <scope>NUCLEOTIDE SEQUENCE [LARGE SCALE GENOMIC DNA]</scope>
    <source>
        <strain>301 / Serotype 2a</strain>
    </source>
</reference>
<reference key="2">
    <citation type="journal article" date="2003" name="Infect. Immun.">
        <title>Complete genome sequence and comparative genomics of Shigella flexneri serotype 2a strain 2457T.</title>
        <authorList>
            <person name="Wei J."/>
            <person name="Goldberg M.B."/>
            <person name="Burland V."/>
            <person name="Venkatesan M.M."/>
            <person name="Deng W."/>
            <person name="Fournier G."/>
            <person name="Mayhew G.F."/>
            <person name="Plunkett G. III"/>
            <person name="Rose D.J."/>
            <person name="Darling A."/>
            <person name="Mau B."/>
            <person name="Perna N.T."/>
            <person name="Payne S.M."/>
            <person name="Runyen-Janecky L.J."/>
            <person name="Zhou S."/>
            <person name="Schwartz D.C."/>
            <person name="Blattner F.R."/>
        </authorList>
    </citation>
    <scope>NUCLEOTIDE SEQUENCE [LARGE SCALE GENOMIC DNA]</scope>
    <source>
        <strain>ATCC 700930 / 2457T / Serotype 2a</strain>
    </source>
</reference>
<comment type="catalytic activity">
    <reaction evidence="1">
        <text>L-glutamine + H2O = L-glutamate + NH4(+)</text>
        <dbReference type="Rhea" id="RHEA:15889"/>
        <dbReference type="ChEBI" id="CHEBI:15377"/>
        <dbReference type="ChEBI" id="CHEBI:28938"/>
        <dbReference type="ChEBI" id="CHEBI:29985"/>
        <dbReference type="ChEBI" id="CHEBI:58359"/>
        <dbReference type="EC" id="3.5.1.2"/>
    </reaction>
</comment>
<comment type="subunit">
    <text evidence="1">Homotetramer.</text>
</comment>
<comment type="similarity">
    <text evidence="1">Belongs to the glutaminase family.</text>
</comment>
<feature type="chain" id="PRO_0000110624" description="Glutaminase 1">
    <location>
        <begin position="1"/>
        <end position="310"/>
    </location>
</feature>
<feature type="binding site" evidence="1">
    <location>
        <position position="66"/>
    </location>
    <ligand>
        <name>substrate</name>
    </ligand>
</feature>
<feature type="binding site" evidence="1">
    <location>
        <position position="117"/>
    </location>
    <ligand>
        <name>substrate</name>
    </ligand>
</feature>
<feature type="binding site" evidence="1">
    <location>
        <position position="161"/>
    </location>
    <ligand>
        <name>substrate</name>
    </ligand>
</feature>
<feature type="binding site" evidence="1">
    <location>
        <position position="168"/>
    </location>
    <ligand>
        <name>substrate</name>
    </ligand>
</feature>
<feature type="binding site" evidence="1">
    <location>
        <position position="192"/>
    </location>
    <ligand>
        <name>substrate</name>
    </ligand>
</feature>
<feature type="binding site" evidence="1">
    <location>
        <position position="244"/>
    </location>
    <ligand>
        <name>substrate</name>
    </ligand>
</feature>
<feature type="binding site" evidence="1">
    <location>
        <position position="262"/>
    </location>
    <ligand>
        <name>substrate</name>
    </ligand>
</feature>
<feature type="modified residue" description="N6-acetyllysine" evidence="1">
    <location>
        <position position="294"/>
    </location>
</feature>
<keyword id="KW-0007">Acetylation</keyword>
<keyword id="KW-0378">Hydrolase</keyword>
<keyword id="KW-1185">Reference proteome</keyword>
<gene>
    <name evidence="1" type="primary">glsA1</name>
    <name type="ordered locus">SF0430</name>
    <name type="ordered locus">S0437</name>
</gene>